<dbReference type="EMBL" id="AAFI02000008">
    <property type="protein sequence ID" value="EAS66954.1"/>
    <property type="molecule type" value="Genomic_DNA"/>
</dbReference>
<dbReference type="RefSeq" id="XP_001134620.1">
    <property type="nucleotide sequence ID" value="XM_001134620.1"/>
</dbReference>
<dbReference type="SMR" id="Q86A21"/>
<dbReference type="BioGRID" id="1243573">
    <property type="interactions" value="1"/>
</dbReference>
<dbReference type="FunCoup" id="Q86A21">
    <property type="interactions" value="1095"/>
</dbReference>
<dbReference type="STRING" id="44689.Q86A21"/>
<dbReference type="MEROPS" id="T01.A14"/>
<dbReference type="PaxDb" id="44689-DDB0232957"/>
<dbReference type="EnsemblProtists" id="EAS66954">
    <property type="protein sequence ID" value="EAS66954"/>
    <property type="gene ID" value="DDB_G0272969"/>
</dbReference>
<dbReference type="GeneID" id="8618570"/>
<dbReference type="KEGG" id="ddi:DDB_G0272969"/>
<dbReference type="dictyBase" id="DDB_G0272969">
    <property type="gene designation" value="psmB1"/>
</dbReference>
<dbReference type="VEuPathDB" id="AmoebaDB:DDB_G0272969"/>
<dbReference type="eggNOG" id="KOG0179">
    <property type="taxonomic scope" value="Eukaryota"/>
</dbReference>
<dbReference type="HOGENOM" id="CLU_035750_1_1_1"/>
<dbReference type="InParanoid" id="Q86A21"/>
<dbReference type="OMA" id="CSGCWCD"/>
<dbReference type="PhylomeDB" id="Q86A21"/>
<dbReference type="PRO" id="PR:Q86A21"/>
<dbReference type="Proteomes" id="UP000002195">
    <property type="component" value="Chromosome 2"/>
</dbReference>
<dbReference type="GO" id="GO:0005737">
    <property type="term" value="C:cytoplasm"/>
    <property type="evidence" value="ECO:0000353"/>
    <property type="project" value="dictyBase"/>
</dbReference>
<dbReference type="GO" id="GO:0005829">
    <property type="term" value="C:cytosol"/>
    <property type="evidence" value="ECO:0000318"/>
    <property type="project" value="GO_Central"/>
</dbReference>
<dbReference type="GO" id="GO:0005634">
    <property type="term" value="C:nucleus"/>
    <property type="evidence" value="ECO:0000353"/>
    <property type="project" value="dictyBase"/>
</dbReference>
<dbReference type="GO" id="GO:0019774">
    <property type="term" value="C:proteasome core complex, beta-subunit complex"/>
    <property type="evidence" value="ECO:0000314"/>
    <property type="project" value="dictyBase"/>
</dbReference>
<dbReference type="GO" id="GO:0010498">
    <property type="term" value="P:proteasomal protein catabolic process"/>
    <property type="evidence" value="ECO:0000314"/>
    <property type="project" value="dictyBase"/>
</dbReference>
<dbReference type="GO" id="GO:0043161">
    <property type="term" value="P:proteasome-mediated ubiquitin-dependent protein catabolic process"/>
    <property type="evidence" value="ECO:0000318"/>
    <property type="project" value="GO_Central"/>
</dbReference>
<dbReference type="CDD" id="cd03757">
    <property type="entry name" value="proteasome_beta_type_1"/>
    <property type="match status" value="1"/>
</dbReference>
<dbReference type="FunFam" id="3.60.20.10:FF:000027">
    <property type="entry name" value="Proteasome subunit beta type-6"/>
    <property type="match status" value="1"/>
</dbReference>
<dbReference type="Gene3D" id="3.60.20.10">
    <property type="entry name" value="Glutamine Phosphoribosylpyrophosphate, subunit 1, domain 1"/>
    <property type="match status" value="1"/>
</dbReference>
<dbReference type="InterPro" id="IPR029055">
    <property type="entry name" value="Ntn_hydrolases_N"/>
</dbReference>
<dbReference type="InterPro" id="IPR016050">
    <property type="entry name" value="Proteasome_bsu_CS"/>
</dbReference>
<dbReference type="InterPro" id="IPR001353">
    <property type="entry name" value="Proteasome_sua/b"/>
</dbReference>
<dbReference type="InterPro" id="IPR023333">
    <property type="entry name" value="Proteasome_suB-type"/>
</dbReference>
<dbReference type="PANTHER" id="PTHR32194">
    <property type="entry name" value="METALLOPROTEASE TLDD"/>
    <property type="match status" value="1"/>
</dbReference>
<dbReference type="PANTHER" id="PTHR32194:SF2">
    <property type="entry name" value="PROTEASOME SUBUNIT BETA TYPE-1"/>
    <property type="match status" value="1"/>
</dbReference>
<dbReference type="Pfam" id="PF00227">
    <property type="entry name" value="Proteasome"/>
    <property type="match status" value="1"/>
</dbReference>
<dbReference type="SUPFAM" id="SSF56235">
    <property type="entry name" value="N-terminal nucleophile aminohydrolases (Ntn hydrolases)"/>
    <property type="match status" value="1"/>
</dbReference>
<dbReference type="PROSITE" id="PS00854">
    <property type="entry name" value="PROTEASOME_BETA_1"/>
    <property type="match status" value="1"/>
</dbReference>
<dbReference type="PROSITE" id="PS51476">
    <property type="entry name" value="PROTEASOME_BETA_2"/>
    <property type="match status" value="1"/>
</dbReference>
<proteinExistence type="inferred from homology"/>
<name>PSB1_DICDI</name>
<feature type="chain" id="PRO_0000328481" description="Proteasome subunit beta type-1">
    <location>
        <begin position="1"/>
        <end position="236"/>
    </location>
</feature>
<evidence type="ECO:0000250" key="1"/>
<evidence type="ECO:0000255" key="2">
    <source>
        <dbReference type="PROSITE-ProRule" id="PRU00809"/>
    </source>
</evidence>
<keyword id="KW-0963">Cytoplasm</keyword>
<keyword id="KW-0539">Nucleus</keyword>
<keyword id="KW-0647">Proteasome</keyword>
<keyword id="KW-1185">Reference proteome</keyword>
<protein>
    <recommendedName>
        <fullName>Proteasome subunit beta type-1</fullName>
    </recommendedName>
</protein>
<comment type="function">
    <text evidence="1">Non-catalytic component of the proteasome, a multicatalytic proteinase complex which is characterized by its ability to cleave peptides with Arg, Phe, Tyr, Leu, and Glu adjacent to the leaving group at neutral or slightly basic pH. The proteasome has an ATP-dependent proteolytic activity (By similarity).</text>
</comment>
<comment type="subunit">
    <text evidence="1">The 26S proteasome consists of a 20S proteasome core and two 19S regulatory subunits. The 20S proteasome core is composed of 28 subunits that are arranged in four stacked rings, resulting in a barrel-shaped structure. The two end rings are each formed by seven alpha subunits, and the two central rings are each formed by seven beta subunits. The catalytic chamber with the active sites is on the inside of the barrel (By similarity).</text>
</comment>
<comment type="subcellular location">
    <subcellularLocation>
        <location evidence="2">Cytoplasm</location>
    </subcellularLocation>
    <subcellularLocation>
        <location evidence="1">Nucleus</location>
    </subcellularLocation>
</comment>
<comment type="similarity">
    <text evidence="2">Belongs to the peptidase T1B family.</text>
</comment>
<sequence length="236" mass="26380">METLKLSALPEKDKQQPISHGRFEAYVDNGGTVLAVAGKDYCVIAGDTRMSDGGYGIQTRKYTKIFQLTKKCVLATSGMQADTIALQKRLKSMLESFEKEHGKPMSTPAIAQFLSNTLYYKRFFPYYTFNLVAGVDEQGEGWIWTYDAVGSHERVKYSSQGSGNQLVIPLLDNQVAKFNQQIVEGNKDVSCEQVVSFVKDSITSAGERDIYTGDFADIVVVDKNGVHWEKFELKLD</sequence>
<accession>Q86A21</accession>
<accession>Q1ZXN1</accession>
<gene>
    <name type="primary">psmB1</name>
    <name type="ORF">DDB_G0272969</name>
</gene>
<organism>
    <name type="scientific">Dictyostelium discoideum</name>
    <name type="common">Social amoeba</name>
    <dbReference type="NCBI Taxonomy" id="44689"/>
    <lineage>
        <taxon>Eukaryota</taxon>
        <taxon>Amoebozoa</taxon>
        <taxon>Evosea</taxon>
        <taxon>Eumycetozoa</taxon>
        <taxon>Dictyostelia</taxon>
        <taxon>Dictyosteliales</taxon>
        <taxon>Dictyosteliaceae</taxon>
        <taxon>Dictyostelium</taxon>
    </lineage>
</organism>
<reference key="1">
    <citation type="journal article" date="2002" name="Nature">
        <title>Sequence and analysis of chromosome 2 of Dictyostelium discoideum.</title>
        <authorList>
            <person name="Gloeckner G."/>
            <person name="Eichinger L."/>
            <person name="Szafranski K."/>
            <person name="Pachebat J.A."/>
            <person name="Bankier A.T."/>
            <person name="Dear P.H."/>
            <person name="Lehmann R."/>
            <person name="Baumgart C."/>
            <person name="Parra G."/>
            <person name="Abril J.F."/>
            <person name="Guigo R."/>
            <person name="Kumpf K."/>
            <person name="Tunggal B."/>
            <person name="Cox E.C."/>
            <person name="Quail M.A."/>
            <person name="Platzer M."/>
            <person name="Rosenthal A."/>
            <person name="Noegel A.A."/>
        </authorList>
    </citation>
    <scope>NUCLEOTIDE SEQUENCE [LARGE SCALE GENOMIC DNA]</scope>
    <source>
        <strain>AX4</strain>
    </source>
</reference>
<reference key="2">
    <citation type="journal article" date="2005" name="Nature">
        <title>The genome of the social amoeba Dictyostelium discoideum.</title>
        <authorList>
            <person name="Eichinger L."/>
            <person name="Pachebat J.A."/>
            <person name="Gloeckner G."/>
            <person name="Rajandream M.A."/>
            <person name="Sucgang R."/>
            <person name="Berriman M."/>
            <person name="Song J."/>
            <person name="Olsen R."/>
            <person name="Szafranski K."/>
            <person name="Xu Q."/>
            <person name="Tunggal B."/>
            <person name="Kummerfeld S."/>
            <person name="Madera M."/>
            <person name="Konfortov B.A."/>
            <person name="Rivero F."/>
            <person name="Bankier A.T."/>
            <person name="Lehmann R."/>
            <person name="Hamlin N."/>
            <person name="Davies R."/>
            <person name="Gaudet P."/>
            <person name="Fey P."/>
            <person name="Pilcher K."/>
            <person name="Chen G."/>
            <person name="Saunders D."/>
            <person name="Sodergren E.J."/>
            <person name="Davis P."/>
            <person name="Kerhornou A."/>
            <person name="Nie X."/>
            <person name="Hall N."/>
            <person name="Anjard C."/>
            <person name="Hemphill L."/>
            <person name="Bason N."/>
            <person name="Farbrother P."/>
            <person name="Desany B."/>
            <person name="Just E."/>
            <person name="Morio T."/>
            <person name="Rost R."/>
            <person name="Churcher C.M."/>
            <person name="Cooper J."/>
            <person name="Haydock S."/>
            <person name="van Driessche N."/>
            <person name="Cronin A."/>
            <person name="Goodhead I."/>
            <person name="Muzny D.M."/>
            <person name="Mourier T."/>
            <person name="Pain A."/>
            <person name="Lu M."/>
            <person name="Harper D."/>
            <person name="Lindsay R."/>
            <person name="Hauser H."/>
            <person name="James K.D."/>
            <person name="Quiles M."/>
            <person name="Madan Babu M."/>
            <person name="Saito T."/>
            <person name="Buchrieser C."/>
            <person name="Wardroper A."/>
            <person name="Felder M."/>
            <person name="Thangavelu M."/>
            <person name="Johnson D."/>
            <person name="Knights A."/>
            <person name="Loulseged H."/>
            <person name="Mungall K.L."/>
            <person name="Oliver K."/>
            <person name="Price C."/>
            <person name="Quail M.A."/>
            <person name="Urushihara H."/>
            <person name="Hernandez J."/>
            <person name="Rabbinowitsch E."/>
            <person name="Steffen D."/>
            <person name="Sanders M."/>
            <person name="Ma J."/>
            <person name="Kohara Y."/>
            <person name="Sharp S."/>
            <person name="Simmonds M.N."/>
            <person name="Spiegler S."/>
            <person name="Tivey A."/>
            <person name="Sugano S."/>
            <person name="White B."/>
            <person name="Walker D."/>
            <person name="Woodward J.R."/>
            <person name="Winckler T."/>
            <person name="Tanaka Y."/>
            <person name="Shaulsky G."/>
            <person name="Schleicher M."/>
            <person name="Weinstock G.M."/>
            <person name="Rosenthal A."/>
            <person name="Cox E.C."/>
            <person name="Chisholm R.L."/>
            <person name="Gibbs R.A."/>
            <person name="Loomis W.F."/>
            <person name="Platzer M."/>
            <person name="Kay R.R."/>
            <person name="Williams J.G."/>
            <person name="Dear P.H."/>
            <person name="Noegel A.A."/>
            <person name="Barrell B.G."/>
            <person name="Kuspa A."/>
        </authorList>
    </citation>
    <scope>NUCLEOTIDE SEQUENCE [LARGE SCALE GENOMIC DNA]</scope>
    <source>
        <strain>AX4</strain>
    </source>
</reference>